<sequence>MHSSALLCYLVFLAGVGASRDRGTQSENSCTHFPTSLPHMLHELRAAFSRVKTFFQMKDQLDNMLLNGSLLEDFKGYLGCQALSEMIQFYLEEVMPQAENHGPDIKEHVNSLGEKLKTLRVRLRRCHRFLPCENKSKAVEQVKSAFSKLQEKGVYKAMSEFDIFINYIEAYMTTKMKN</sequence>
<evidence type="ECO:0000250" key="1"/>
<evidence type="ECO:0000250" key="2">
    <source>
        <dbReference type="UniProtKB" id="P18893"/>
    </source>
</evidence>
<evidence type="ECO:0000250" key="3">
    <source>
        <dbReference type="UniProtKB" id="P22301"/>
    </source>
</evidence>
<evidence type="ECO:0000255" key="4"/>
<evidence type="ECO:0000305" key="5"/>
<protein>
    <recommendedName>
        <fullName>Interleukin-10</fullName>
        <shortName>IL-10</shortName>
    </recommendedName>
    <alternativeName>
        <fullName>Cytokine synthesis inhibitory factor</fullName>
        <shortName>CSIF</shortName>
    </alternativeName>
</protein>
<name>IL10_HORSE</name>
<accession>Q28374</accession>
<dbReference type="EMBL" id="U38200">
    <property type="protein sequence ID" value="AAA79997.1"/>
    <property type="molecule type" value="mRNA"/>
</dbReference>
<dbReference type="RefSeq" id="NP_001075959.1">
    <property type="nucleotide sequence ID" value="NM_001082490.1"/>
</dbReference>
<dbReference type="SMR" id="Q28374"/>
<dbReference type="FunCoup" id="Q28374">
    <property type="interactions" value="315"/>
</dbReference>
<dbReference type="STRING" id="9796.ENSECAP00000007097"/>
<dbReference type="GlyCosmos" id="Q28374">
    <property type="glycosylation" value="2 sites, No reported glycans"/>
</dbReference>
<dbReference type="PaxDb" id="9796-ENSECAP00000007097"/>
<dbReference type="GeneID" id="100034187"/>
<dbReference type="KEGG" id="ecb:100034187"/>
<dbReference type="CTD" id="3586"/>
<dbReference type="InParanoid" id="Q28374"/>
<dbReference type="OrthoDB" id="9931894at2759"/>
<dbReference type="Proteomes" id="UP000002281">
    <property type="component" value="Unplaced"/>
</dbReference>
<dbReference type="GO" id="GO:0005615">
    <property type="term" value="C:extracellular space"/>
    <property type="evidence" value="ECO:0000250"/>
    <property type="project" value="UniProtKB"/>
</dbReference>
<dbReference type="GO" id="GO:0005125">
    <property type="term" value="F:cytokine activity"/>
    <property type="evidence" value="ECO:0000318"/>
    <property type="project" value="GO_Central"/>
</dbReference>
<dbReference type="GO" id="GO:0006955">
    <property type="term" value="P:immune response"/>
    <property type="evidence" value="ECO:0000318"/>
    <property type="project" value="GO_Central"/>
</dbReference>
<dbReference type="GO" id="GO:0140105">
    <property type="term" value="P:interleukin-10-mediated signaling pathway"/>
    <property type="evidence" value="ECO:0000318"/>
    <property type="project" value="GO_Central"/>
</dbReference>
<dbReference type="GO" id="GO:0030889">
    <property type="term" value="P:negative regulation of B cell proliferation"/>
    <property type="evidence" value="ECO:0000250"/>
    <property type="project" value="UniProtKB"/>
</dbReference>
<dbReference type="GO" id="GO:0002719">
    <property type="term" value="P:negative regulation of cytokine production involved in immune response"/>
    <property type="evidence" value="ECO:0000250"/>
    <property type="project" value="UniProtKB"/>
</dbReference>
<dbReference type="GO" id="GO:0050728">
    <property type="term" value="P:negative regulation of inflammatory response"/>
    <property type="evidence" value="ECO:0000250"/>
    <property type="project" value="UniProtKB"/>
</dbReference>
<dbReference type="GO" id="GO:0032715">
    <property type="term" value="P:negative regulation of interleukin-6 production"/>
    <property type="evidence" value="ECO:0000250"/>
    <property type="project" value="UniProtKB"/>
</dbReference>
<dbReference type="GO" id="GO:0051045">
    <property type="term" value="P:negative regulation of membrane protein ectodomain proteolysis"/>
    <property type="evidence" value="ECO:0000250"/>
    <property type="project" value="UniProtKB"/>
</dbReference>
<dbReference type="GO" id="GO:0002904">
    <property type="term" value="P:positive regulation of B cell apoptotic process"/>
    <property type="evidence" value="ECO:0000250"/>
    <property type="project" value="UniProtKB"/>
</dbReference>
<dbReference type="GO" id="GO:0001819">
    <property type="term" value="P:positive regulation of cytokine production"/>
    <property type="evidence" value="ECO:0000250"/>
    <property type="project" value="UniProtKB"/>
</dbReference>
<dbReference type="GO" id="GO:0051091">
    <property type="term" value="P:positive regulation of DNA-binding transcription factor activity"/>
    <property type="evidence" value="ECO:0000250"/>
    <property type="project" value="UniProtKB"/>
</dbReference>
<dbReference type="GO" id="GO:0045893">
    <property type="term" value="P:positive regulation of DNA-templated transcription"/>
    <property type="evidence" value="ECO:0000250"/>
    <property type="project" value="UniProtKB"/>
</dbReference>
<dbReference type="GO" id="GO:0046427">
    <property type="term" value="P:positive regulation of receptor signaling pathway via JAK-STAT"/>
    <property type="evidence" value="ECO:0000318"/>
    <property type="project" value="GO_Central"/>
</dbReference>
<dbReference type="GO" id="GO:0051384">
    <property type="term" value="P:response to glucocorticoid"/>
    <property type="evidence" value="ECO:0000250"/>
    <property type="project" value="UniProtKB"/>
</dbReference>
<dbReference type="GO" id="GO:0002237">
    <property type="term" value="P:response to molecule of bacterial origin"/>
    <property type="evidence" value="ECO:0000250"/>
    <property type="project" value="UniProtKB"/>
</dbReference>
<dbReference type="FunFam" id="1.20.1250.10:FF:000011">
    <property type="entry name" value="Interleukin-10"/>
    <property type="match status" value="1"/>
</dbReference>
<dbReference type="Gene3D" id="1.20.1250.10">
    <property type="match status" value="1"/>
</dbReference>
<dbReference type="InterPro" id="IPR009079">
    <property type="entry name" value="4_helix_cytokine-like_core"/>
</dbReference>
<dbReference type="InterPro" id="IPR000098">
    <property type="entry name" value="IL-10"/>
</dbReference>
<dbReference type="InterPro" id="IPR020443">
    <property type="entry name" value="IL-10/19/20/24/26"/>
</dbReference>
<dbReference type="InterPro" id="IPR020423">
    <property type="entry name" value="IL-10_CS"/>
</dbReference>
<dbReference type="PANTHER" id="PTHR48482:SF5">
    <property type="entry name" value="INTERLEUKIN-10"/>
    <property type="match status" value="1"/>
</dbReference>
<dbReference type="PANTHER" id="PTHR48482">
    <property type="entry name" value="INTERLEUKIN-19-RELATED"/>
    <property type="match status" value="1"/>
</dbReference>
<dbReference type="Pfam" id="PF00726">
    <property type="entry name" value="IL10"/>
    <property type="match status" value="1"/>
</dbReference>
<dbReference type="PRINTS" id="PR01294">
    <property type="entry name" value="INTRLEUKIN10"/>
</dbReference>
<dbReference type="SMART" id="SM00188">
    <property type="entry name" value="IL10"/>
    <property type="match status" value="1"/>
</dbReference>
<dbReference type="SUPFAM" id="SSF47266">
    <property type="entry name" value="4-helical cytokines"/>
    <property type="match status" value="1"/>
</dbReference>
<dbReference type="PROSITE" id="PS00520">
    <property type="entry name" value="INTERLEUKIN_10"/>
    <property type="match status" value="1"/>
</dbReference>
<comment type="function">
    <text evidence="2 3">Major immune regulatory cytokine that acts on many cells of the immune system where it has profound anti-inflammatory functions, limiting excessive tissue disruption caused by inflammation. Mechanistically, IL10 binds to its heterotetrameric receptor comprising IL10RA and IL10RB leading to JAK1 and STAT2-mediated phosphorylation of STAT3. In turn, STAT3 translocates to the nucleus where it drives expression of anti-inflammatory mediators. Targets antigen-presenting cells (APCs) such as macrophages and monocytes and inhibits their release of pro-inflammatory cytokines including granulocyte-macrophage colony-stimulating factor /GM-CSF, granulocyte colony-stimulating factor/G-CSF, IL-1 alpha, IL-1 beta, IL-6, IL-8 and TNF-alpha. Also interferes with antigen presentation by reducing the expression of MHC-class II and co-stimulatory molecules, thereby inhibiting their ability to induce T cell activation (By similarity). In addition, controls the inflammatory response of macrophages by reprogramming essential metabolic pathways including mTOR signaling (By similarity).</text>
</comment>
<comment type="subunit">
    <text evidence="3">Homodimer. Interacts with IL10RA and IL10RB.</text>
</comment>
<comment type="subcellular location">
    <subcellularLocation>
        <location evidence="3">Secreted</location>
    </subcellularLocation>
</comment>
<comment type="similarity">
    <text evidence="5">Belongs to the IL-10 family.</text>
</comment>
<proteinExistence type="evidence at transcript level"/>
<keyword id="KW-0202">Cytokine</keyword>
<keyword id="KW-1015">Disulfide bond</keyword>
<keyword id="KW-0325">Glycoprotein</keyword>
<keyword id="KW-1185">Reference proteome</keyword>
<keyword id="KW-0964">Secreted</keyword>
<keyword id="KW-0732">Signal</keyword>
<gene>
    <name type="primary">IL10</name>
</gene>
<reference key="1">
    <citation type="submission" date="1995-10" db="EMBL/GenBank/DDBJ databases">
        <authorList>
            <person name="Swiderski C.E."/>
            <person name="O'Reilly K.L."/>
            <person name="Horohov D.W."/>
        </authorList>
    </citation>
    <scope>NUCLEOTIDE SEQUENCE [MRNA]</scope>
</reference>
<organism>
    <name type="scientific">Equus caballus</name>
    <name type="common">Horse</name>
    <dbReference type="NCBI Taxonomy" id="9796"/>
    <lineage>
        <taxon>Eukaryota</taxon>
        <taxon>Metazoa</taxon>
        <taxon>Chordata</taxon>
        <taxon>Craniata</taxon>
        <taxon>Vertebrata</taxon>
        <taxon>Euteleostomi</taxon>
        <taxon>Mammalia</taxon>
        <taxon>Eutheria</taxon>
        <taxon>Laurasiatheria</taxon>
        <taxon>Perissodactyla</taxon>
        <taxon>Equidae</taxon>
        <taxon>Equus</taxon>
    </lineage>
</organism>
<feature type="signal peptide" evidence="4">
    <location>
        <begin position="1"/>
        <end position="18"/>
    </location>
</feature>
<feature type="chain" id="PRO_0000015359" description="Interleukin-10">
    <location>
        <begin position="19"/>
        <end position="178"/>
    </location>
</feature>
<feature type="glycosylation site" description="N-linked (GlcNAc...) asparagine" evidence="4">
    <location>
        <position position="67"/>
    </location>
</feature>
<feature type="glycosylation site" description="N-linked (GlcNAc...) asparagine" evidence="4">
    <location>
        <position position="134"/>
    </location>
</feature>
<feature type="disulfide bond" evidence="1">
    <location>
        <begin position="30"/>
        <end position="126"/>
    </location>
</feature>
<feature type="disulfide bond" evidence="1">
    <location>
        <begin position="80"/>
        <end position="132"/>
    </location>
</feature>